<comment type="function">
    <text>DNA polymerase alpha mutation suppressor.</text>
</comment>
<comment type="subcellular location">
    <subcellularLocation>
        <location>Cytoplasm</location>
    </subcellularLocation>
    <subcellularLocation>
        <location>Mitochondrion</location>
    </subcellularLocation>
</comment>
<comment type="miscellaneous">
    <text evidence="3">Present with 259 molecules/cell in log phase SD medium.</text>
</comment>
<comment type="similarity">
    <text evidence="4">Belongs to the PSP1 family.</text>
</comment>
<evidence type="ECO:0000255" key="1">
    <source>
        <dbReference type="PROSITE-ProRule" id="PRU00744"/>
    </source>
</evidence>
<evidence type="ECO:0000256" key="2">
    <source>
        <dbReference type="SAM" id="MobiDB-lite"/>
    </source>
</evidence>
<evidence type="ECO:0000269" key="3">
    <source>
    </source>
</evidence>
<evidence type="ECO:0000305" key="4"/>
<evidence type="ECO:0007744" key="5">
    <source>
    </source>
</evidence>
<evidence type="ECO:0007744" key="6">
    <source>
    </source>
</evidence>
<evidence type="ECO:0007744" key="7">
    <source>
    </source>
</evidence>
<organism>
    <name type="scientific">Saccharomyces cerevisiae (strain ATCC 204508 / S288c)</name>
    <name type="common">Baker's yeast</name>
    <dbReference type="NCBI Taxonomy" id="559292"/>
    <lineage>
        <taxon>Eukaryota</taxon>
        <taxon>Fungi</taxon>
        <taxon>Dikarya</taxon>
        <taxon>Ascomycota</taxon>
        <taxon>Saccharomycotina</taxon>
        <taxon>Saccharomycetes</taxon>
        <taxon>Saccharomycetales</taxon>
        <taxon>Saccharomycetaceae</taxon>
        <taxon>Saccharomyces</taxon>
    </lineage>
</organism>
<dbReference type="EMBL" id="U33115">
    <property type="protein sequence ID" value="AAA93076.1"/>
    <property type="molecule type" value="Genomic_DNA"/>
</dbReference>
<dbReference type="EMBL" id="U33057">
    <property type="protein sequence ID" value="AAB64947.1"/>
    <property type="molecule type" value="Genomic_DNA"/>
</dbReference>
<dbReference type="EMBL" id="BK006938">
    <property type="protein sequence ID" value="DAA12337.2"/>
    <property type="molecule type" value="Genomic_DNA"/>
</dbReference>
<dbReference type="PIR" id="S69563">
    <property type="entry name" value="S69563"/>
</dbReference>
<dbReference type="RefSeq" id="NP_010793.2">
    <property type="nucleotide sequence ID" value="NM_001180813.2"/>
</dbReference>
<dbReference type="BioGRID" id="32556">
    <property type="interactions" value="147"/>
</dbReference>
<dbReference type="DIP" id="DIP-5018N"/>
<dbReference type="FunCoup" id="P50896">
    <property type="interactions" value="116"/>
</dbReference>
<dbReference type="IntAct" id="P50896">
    <property type="interactions" value="12"/>
</dbReference>
<dbReference type="MINT" id="P50896"/>
<dbReference type="STRING" id="4932.YDR505C"/>
<dbReference type="GlyGen" id="P50896">
    <property type="glycosylation" value="2 sites, 1 O-linked glycan (2 sites)"/>
</dbReference>
<dbReference type="iPTMnet" id="P50896"/>
<dbReference type="PaxDb" id="4932-YDR505C"/>
<dbReference type="PeptideAtlas" id="P50896"/>
<dbReference type="EnsemblFungi" id="YDR505C_mRNA">
    <property type="protein sequence ID" value="YDR505C"/>
    <property type="gene ID" value="YDR505C"/>
</dbReference>
<dbReference type="GeneID" id="852116"/>
<dbReference type="KEGG" id="sce:YDR505C"/>
<dbReference type="AGR" id="SGD:S000002913"/>
<dbReference type="SGD" id="S000002913">
    <property type="gene designation" value="PSP1"/>
</dbReference>
<dbReference type="VEuPathDB" id="FungiDB:YDR505C"/>
<dbReference type="eggNOG" id="KOG4679">
    <property type="taxonomic scope" value="Eukaryota"/>
</dbReference>
<dbReference type="GeneTree" id="ENSGT00940000176361"/>
<dbReference type="HOGENOM" id="CLU_012771_0_0_1"/>
<dbReference type="InParanoid" id="P50896"/>
<dbReference type="OMA" id="YYVCQER"/>
<dbReference type="OrthoDB" id="243127at2759"/>
<dbReference type="BioCyc" id="YEAST:G3O-30026-MONOMER"/>
<dbReference type="BioGRID-ORCS" id="852116">
    <property type="hits" value="1 hit in 10 CRISPR screens"/>
</dbReference>
<dbReference type="CD-CODE" id="A777E0F8">
    <property type="entry name" value="P-body"/>
</dbReference>
<dbReference type="PRO" id="PR:P50896"/>
<dbReference type="Proteomes" id="UP000002311">
    <property type="component" value="Chromosome IV"/>
</dbReference>
<dbReference type="RNAct" id="P50896">
    <property type="molecule type" value="protein"/>
</dbReference>
<dbReference type="GO" id="GO:0005737">
    <property type="term" value="C:cytoplasm"/>
    <property type="evidence" value="ECO:0007005"/>
    <property type="project" value="SGD"/>
</dbReference>
<dbReference type="GO" id="GO:0005739">
    <property type="term" value="C:mitochondrion"/>
    <property type="evidence" value="ECO:0007005"/>
    <property type="project" value="SGD"/>
</dbReference>
<dbReference type="GO" id="GO:0000932">
    <property type="term" value="C:P-body"/>
    <property type="evidence" value="ECO:0000314"/>
    <property type="project" value="SGD"/>
</dbReference>
<dbReference type="GO" id="GO:0003729">
    <property type="term" value="F:mRNA binding"/>
    <property type="evidence" value="ECO:0007005"/>
    <property type="project" value="SGD"/>
</dbReference>
<dbReference type="InterPro" id="IPR047767">
    <property type="entry name" value="PSP1-like"/>
</dbReference>
<dbReference type="InterPro" id="IPR007557">
    <property type="entry name" value="PSP1_C"/>
</dbReference>
<dbReference type="PANTHER" id="PTHR43830">
    <property type="entry name" value="PROTEIN PSP1"/>
    <property type="match status" value="1"/>
</dbReference>
<dbReference type="PANTHER" id="PTHR43830:SF3">
    <property type="entry name" value="PROTEIN PSP1"/>
    <property type="match status" value="1"/>
</dbReference>
<dbReference type="Pfam" id="PF04468">
    <property type="entry name" value="PSP1"/>
    <property type="match status" value="1"/>
</dbReference>
<dbReference type="PROSITE" id="PS51411">
    <property type="entry name" value="PSP1_C"/>
    <property type="match status" value="1"/>
</dbReference>
<feature type="chain" id="PRO_0000097068" description="Protein PSP1">
    <location>
        <begin position="1"/>
        <end position="841"/>
    </location>
</feature>
<feature type="domain" description="PSP1 C-terminal" evidence="1">
    <location>
        <begin position="653"/>
        <end position="765"/>
    </location>
</feature>
<feature type="region of interest" description="Disordered" evidence="2">
    <location>
        <begin position="33"/>
        <end position="57"/>
    </location>
</feature>
<feature type="region of interest" description="Disordered" evidence="2">
    <location>
        <begin position="118"/>
        <end position="147"/>
    </location>
</feature>
<feature type="region of interest" description="Disordered" evidence="2">
    <location>
        <begin position="202"/>
        <end position="233"/>
    </location>
</feature>
<feature type="region of interest" description="Disordered" evidence="2">
    <location>
        <begin position="290"/>
        <end position="324"/>
    </location>
</feature>
<feature type="region of interest" description="Disordered" evidence="2">
    <location>
        <begin position="337"/>
        <end position="369"/>
    </location>
</feature>
<feature type="region of interest" description="Disordered" evidence="2">
    <location>
        <begin position="384"/>
        <end position="405"/>
    </location>
</feature>
<feature type="compositionally biased region" description="Polar residues" evidence="2">
    <location>
        <begin position="118"/>
        <end position="130"/>
    </location>
</feature>
<feature type="compositionally biased region" description="Low complexity" evidence="2">
    <location>
        <begin position="305"/>
        <end position="323"/>
    </location>
</feature>
<feature type="compositionally biased region" description="Polar residues" evidence="2">
    <location>
        <begin position="337"/>
        <end position="347"/>
    </location>
</feature>
<feature type="compositionally biased region" description="Low complexity" evidence="2">
    <location>
        <begin position="348"/>
        <end position="360"/>
    </location>
</feature>
<feature type="compositionally biased region" description="Low complexity" evidence="2">
    <location>
        <begin position="385"/>
        <end position="394"/>
    </location>
</feature>
<feature type="compositionally biased region" description="Polar residues" evidence="2">
    <location>
        <begin position="395"/>
        <end position="405"/>
    </location>
</feature>
<feature type="modified residue" description="Phosphoserine" evidence="6 7">
    <location>
        <position position="31"/>
    </location>
</feature>
<feature type="modified residue" description="Phosphoserine" evidence="6 7">
    <location>
        <position position="34"/>
    </location>
</feature>
<feature type="modified residue" description="Phosphoserine" evidence="7">
    <location>
        <position position="36"/>
    </location>
</feature>
<feature type="modified residue" description="Phosphoserine" evidence="7">
    <location>
        <position position="237"/>
    </location>
</feature>
<feature type="modified residue" description="Phosphothreonine" evidence="7">
    <location>
        <position position="334"/>
    </location>
</feature>
<feature type="modified residue" description="Phosphoserine" evidence="5 6 7">
    <location>
        <position position="520"/>
    </location>
</feature>
<feature type="sequence conflict" description="In Ref. 1; AAA93076." evidence="4" ref="1">
    <original>S</original>
    <variation>C</variation>
    <location>
        <position position="116"/>
    </location>
</feature>
<feature type="sequence conflict" description="In Ref. 1; AAA93076." evidence="4" ref="1">
    <original>QMSSSNSEPMSA</original>
    <variation>KCLRLIQSCVP</variation>
    <location>
        <begin position="122"/>
        <end position="133"/>
    </location>
</feature>
<feature type="sequence conflict" description="In Ref. 1; AAA93076." evidence="4" ref="1">
    <original>GSNFAAPSHSAGN</original>
    <variation>RAILLPHHTVLAT</variation>
    <location>
        <begin position="198"/>
        <end position="210"/>
    </location>
</feature>
<feature type="sequence conflict" description="In Ref. 2; AAB64947." evidence="4" ref="2">
    <original>K</original>
    <variation>E</variation>
    <location>
        <position position="732"/>
    </location>
</feature>
<name>PSP1_YEAST</name>
<accession>P50896</accession>
<accession>D6VTC7</accession>
<gene>
    <name type="primary">PSP1</name>
    <name type="synonym">GIN5</name>
    <name type="ordered locus">YDR505C</name>
    <name type="ORF">D9719.11</name>
</gene>
<protein>
    <recommendedName>
        <fullName>Protein PSP1</fullName>
    </recommendedName>
    <alternativeName>
        <fullName>Growth inhibitory protein 5</fullName>
    </alternativeName>
    <alternativeName>
        <fullName>Polymerase suppressor protein 1</fullName>
    </alternativeName>
</protein>
<sequence>MDLPTVNSTTSISDNVDLKNYYEDLLFKNNSGKSLSDLPRKLNDNSNNSGSDTVDPLAGLNNLRNSIKSAGNGMENRRTFDDIDFMGRFPYLPPVPNQQQQPFSHQNGFIQEHPSSNLTSFQMSSSNSEPMSAPPISSNNNNLNSTQMGNYQAQQRSFPQFNGNSFHSNGNDLMGNRMDSDYMRLMNKTNIGFTSNSGSNFAAPSHSAGNPSSMNNQQVPSFNWQQPSHPESTIRRSSYISDTLINHQMPDARQKQTSQVQQQHAQGFNLFNSRFNYDNLNSTHLTAKGVPEFGNGVQPPYPYDNEPNNASISNSNNNNNSHNMVPMQQFRRNTQPVASFNPSLPTFQQQQQQPQQPQQPRNVNVPTSFNGERVDDVQLVQLQRSSSVPSSTNSHNLQNENSNEGNVSLDNGLVLIQGKHLTSSKTLHDLYSDCGSGYFASSAVFEFTDNIKKMLKLHDSNESYDAKNMGLIDEEGNTYQSLLNFLDILRSCNMNYVNDPESNNGIVSNNGGNKNRRKGSFTTELSCRNANNSFLPYTPLVLVALKNGKLELLSTPQATNLLLKRGDLVIIDGDRGRDLVLVVEPSVDLNLALFINFLKKKIHFDSLITSESQHYRNDEFIQMLIDSKNGQKKKLNPKLYDVVELTELIIPSKQVLRFATPWEVTTNLHNKFEDELKALHIAQSKLQALNDNSKSQNTNDSSSNNFTNAATYSKPKLNIKILNAEFQFDRKKLTFYYVCEERNDFRDLIKELFKYYKTRIWLCAIPNNLSIDSKYYDKQQKELKLYQNIVKNYNAEDLMNVNEFSQNRGNNRVNFAPPLNEIELDNFQIAVYEELVHELFH</sequence>
<keyword id="KW-0963">Cytoplasm</keyword>
<keyword id="KW-0496">Mitochondrion</keyword>
<keyword id="KW-0597">Phosphoprotein</keyword>
<keyword id="KW-1185">Reference proteome</keyword>
<proteinExistence type="evidence at protein level"/>
<reference key="1">
    <citation type="journal article" date="1998" name="Mol. Gen. Genet.">
        <title>Suppressors of the temperature sensitivity of DNA polymerase alpha mutations in Saccharomyces cerevisiae.</title>
        <authorList>
            <person name="Formosa T."/>
            <person name="Nittis T."/>
        </authorList>
    </citation>
    <scope>NUCLEOTIDE SEQUENCE [GENOMIC DNA]</scope>
</reference>
<reference key="2">
    <citation type="journal article" date="1997" name="Nature">
        <title>The nucleotide sequence of Saccharomyces cerevisiae chromosome IV.</title>
        <authorList>
            <person name="Jacq C."/>
            <person name="Alt-Moerbe J."/>
            <person name="Andre B."/>
            <person name="Arnold W."/>
            <person name="Bahr A."/>
            <person name="Ballesta J.P.G."/>
            <person name="Bargues M."/>
            <person name="Baron L."/>
            <person name="Becker A."/>
            <person name="Biteau N."/>
            <person name="Bloecker H."/>
            <person name="Blugeon C."/>
            <person name="Boskovic J."/>
            <person name="Brandt P."/>
            <person name="Brueckner M."/>
            <person name="Buitrago M.J."/>
            <person name="Coster F."/>
            <person name="Delaveau T."/>
            <person name="del Rey F."/>
            <person name="Dujon B."/>
            <person name="Eide L.G."/>
            <person name="Garcia-Cantalejo J.M."/>
            <person name="Goffeau A."/>
            <person name="Gomez-Peris A."/>
            <person name="Granotier C."/>
            <person name="Hanemann V."/>
            <person name="Hankeln T."/>
            <person name="Hoheisel J.D."/>
            <person name="Jaeger W."/>
            <person name="Jimenez A."/>
            <person name="Jonniaux J.-L."/>
            <person name="Kraemer C."/>
            <person name="Kuester H."/>
            <person name="Laamanen P."/>
            <person name="Legros Y."/>
            <person name="Louis E.J."/>
            <person name="Moeller-Rieker S."/>
            <person name="Monnet A."/>
            <person name="Moro M."/>
            <person name="Mueller-Auer S."/>
            <person name="Nussbaumer B."/>
            <person name="Paricio N."/>
            <person name="Paulin L."/>
            <person name="Perea J."/>
            <person name="Perez-Alonso M."/>
            <person name="Perez-Ortin J.E."/>
            <person name="Pohl T.M."/>
            <person name="Prydz H."/>
            <person name="Purnelle B."/>
            <person name="Rasmussen S.W."/>
            <person name="Remacha M.A."/>
            <person name="Revuelta J.L."/>
            <person name="Rieger M."/>
            <person name="Salom D."/>
            <person name="Saluz H.P."/>
            <person name="Saiz J.E."/>
            <person name="Saren A.-M."/>
            <person name="Schaefer M."/>
            <person name="Scharfe M."/>
            <person name="Schmidt E.R."/>
            <person name="Schneider C."/>
            <person name="Scholler P."/>
            <person name="Schwarz S."/>
            <person name="Soler-Mira A."/>
            <person name="Urrestarazu L.A."/>
            <person name="Verhasselt P."/>
            <person name="Vissers S."/>
            <person name="Voet M."/>
            <person name="Volckaert G."/>
            <person name="Wagner G."/>
            <person name="Wambutt R."/>
            <person name="Wedler E."/>
            <person name="Wedler H."/>
            <person name="Woelfl S."/>
            <person name="Harris D.E."/>
            <person name="Bowman S."/>
            <person name="Brown D."/>
            <person name="Churcher C.M."/>
            <person name="Connor R."/>
            <person name="Dedman K."/>
            <person name="Gentles S."/>
            <person name="Hamlin N."/>
            <person name="Hunt S."/>
            <person name="Jones L."/>
            <person name="McDonald S."/>
            <person name="Murphy L.D."/>
            <person name="Niblett D."/>
            <person name="Odell C."/>
            <person name="Oliver K."/>
            <person name="Rajandream M.A."/>
            <person name="Richards C."/>
            <person name="Shore L."/>
            <person name="Walsh S.V."/>
            <person name="Barrell B.G."/>
            <person name="Dietrich F.S."/>
            <person name="Mulligan J.T."/>
            <person name="Allen E."/>
            <person name="Araujo R."/>
            <person name="Aviles E."/>
            <person name="Berno A."/>
            <person name="Carpenter J."/>
            <person name="Chen E."/>
            <person name="Cherry J.M."/>
            <person name="Chung E."/>
            <person name="Duncan M."/>
            <person name="Hunicke-Smith S."/>
            <person name="Hyman R.W."/>
            <person name="Komp C."/>
            <person name="Lashkari D."/>
            <person name="Lew H."/>
            <person name="Lin D."/>
            <person name="Mosedale D."/>
            <person name="Nakahara K."/>
            <person name="Namath A."/>
            <person name="Oefner P."/>
            <person name="Oh C."/>
            <person name="Petel F.X."/>
            <person name="Roberts D."/>
            <person name="Schramm S."/>
            <person name="Schroeder M."/>
            <person name="Shogren T."/>
            <person name="Shroff N."/>
            <person name="Winant A."/>
            <person name="Yelton M.A."/>
            <person name="Botstein D."/>
            <person name="Davis R.W."/>
            <person name="Johnston M."/>
            <person name="Andrews S."/>
            <person name="Brinkman R."/>
            <person name="Cooper J."/>
            <person name="Ding H."/>
            <person name="Du Z."/>
            <person name="Favello A."/>
            <person name="Fulton L."/>
            <person name="Gattung S."/>
            <person name="Greco T."/>
            <person name="Hallsworth K."/>
            <person name="Hawkins J."/>
            <person name="Hillier L.W."/>
            <person name="Jier M."/>
            <person name="Johnson D."/>
            <person name="Johnston L."/>
            <person name="Kirsten J."/>
            <person name="Kucaba T."/>
            <person name="Langston Y."/>
            <person name="Latreille P."/>
            <person name="Le T."/>
            <person name="Mardis E."/>
            <person name="Menezes S."/>
            <person name="Miller N."/>
            <person name="Nhan M."/>
            <person name="Pauley A."/>
            <person name="Peluso D."/>
            <person name="Rifkin L."/>
            <person name="Riles L."/>
            <person name="Taich A."/>
            <person name="Trevaskis E."/>
            <person name="Vignati D."/>
            <person name="Wilcox L."/>
            <person name="Wohldman P."/>
            <person name="Vaudin M."/>
            <person name="Wilson R."/>
            <person name="Waterston R."/>
            <person name="Albermann K."/>
            <person name="Hani J."/>
            <person name="Heumann K."/>
            <person name="Kleine K."/>
            <person name="Mewes H.-W."/>
            <person name="Zollner A."/>
            <person name="Zaccaria P."/>
        </authorList>
    </citation>
    <scope>NUCLEOTIDE SEQUENCE [LARGE SCALE GENOMIC DNA]</scope>
    <source>
        <strain>ATCC 204508 / S288c</strain>
    </source>
</reference>
<reference key="3">
    <citation type="journal article" date="2014" name="G3 (Bethesda)">
        <title>The reference genome sequence of Saccharomyces cerevisiae: Then and now.</title>
        <authorList>
            <person name="Engel S.R."/>
            <person name="Dietrich F.S."/>
            <person name="Fisk D.G."/>
            <person name="Binkley G."/>
            <person name="Balakrishnan R."/>
            <person name="Costanzo M.C."/>
            <person name="Dwight S.S."/>
            <person name="Hitz B.C."/>
            <person name="Karra K."/>
            <person name="Nash R.S."/>
            <person name="Weng S."/>
            <person name="Wong E.D."/>
            <person name="Lloyd P."/>
            <person name="Skrzypek M.S."/>
            <person name="Miyasato S.R."/>
            <person name="Simison M."/>
            <person name="Cherry J.M."/>
        </authorList>
    </citation>
    <scope>GENOME REANNOTATION</scope>
    <scope>SEQUENCE REVISION TO 732</scope>
    <source>
        <strain>ATCC 204508 / S288c</strain>
    </source>
</reference>
<reference key="4">
    <citation type="journal article" date="2003" name="Nature">
        <title>Global analysis of protein localization in budding yeast.</title>
        <authorList>
            <person name="Huh W.-K."/>
            <person name="Falvo J.V."/>
            <person name="Gerke L.C."/>
            <person name="Carroll A.S."/>
            <person name="Howson R.W."/>
            <person name="Weissman J.S."/>
            <person name="O'Shea E.K."/>
        </authorList>
    </citation>
    <scope>SUBCELLULAR LOCATION [LARGE SCALE ANALYSIS]</scope>
</reference>
<reference key="5">
    <citation type="journal article" date="2003" name="Nature">
        <title>Global analysis of protein expression in yeast.</title>
        <authorList>
            <person name="Ghaemmaghami S."/>
            <person name="Huh W.-K."/>
            <person name="Bower K."/>
            <person name="Howson R.W."/>
            <person name="Belle A."/>
            <person name="Dephoure N."/>
            <person name="O'Shea E.K."/>
            <person name="Weissman J.S."/>
        </authorList>
    </citation>
    <scope>LEVEL OF PROTEIN EXPRESSION [LARGE SCALE ANALYSIS]</scope>
</reference>
<reference key="6">
    <citation type="journal article" date="2003" name="Proc. Natl. Acad. Sci. U.S.A.">
        <title>The proteome of Saccharomyces cerevisiae mitochondria.</title>
        <authorList>
            <person name="Sickmann A."/>
            <person name="Reinders J."/>
            <person name="Wagner Y."/>
            <person name="Joppich C."/>
            <person name="Zahedi R.P."/>
            <person name="Meyer H.E."/>
            <person name="Schoenfisch B."/>
            <person name="Perschil I."/>
            <person name="Chacinska A."/>
            <person name="Guiard B."/>
            <person name="Rehling P."/>
            <person name="Pfanner N."/>
            <person name="Meisinger C."/>
        </authorList>
    </citation>
    <scope>SUBCELLULAR LOCATION [LARGE SCALE ANALYSIS]</scope>
</reference>
<reference key="7">
    <citation type="journal article" date="2007" name="J. Proteome Res.">
        <title>Large-scale phosphorylation analysis of alpha-factor-arrested Saccharomyces cerevisiae.</title>
        <authorList>
            <person name="Li X."/>
            <person name="Gerber S.A."/>
            <person name="Rudner A.D."/>
            <person name="Beausoleil S.A."/>
            <person name="Haas W."/>
            <person name="Villen J."/>
            <person name="Elias J.E."/>
            <person name="Gygi S.P."/>
        </authorList>
    </citation>
    <scope>PHOSPHORYLATION [LARGE SCALE ANALYSIS] AT SER-520</scope>
    <scope>IDENTIFICATION BY MASS SPECTROMETRY [LARGE SCALE ANALYSIS]</scope>
    <source>
        <strain>ADR376</strain>
    </source>
</reference>
<reference key="8">
    <citation type="journal article" date="2008" name="Mol. Cell. Proteomics">
        <title>A multidimensional chromatography technology for in-depth phosphoproteome analysis.</title>
        <authorList>
            <person name="Albuquerque C.P."/>
            <person name="Smolka M.B."/>
            <person name="Payne S.H."/>
            <person name="Bafna V."/>
            <person name="Eng J."/>
            <person name="Zhou H."/>
        </authorList>
    </citation>
    <scope>PHOSPHORYLATION [LARGE SCALE ANALYSIS] AT SER-31; SER-34 AND SER-520</scope>
    <scope>IDENTIFICATION BY MASS SPECTROMETRY [LARGE SCALE ANALYSIS]</scope>
</reference>
<reference key="9">
    <citation type="journal article" date="2009" name="Science">
        <title>Global analysis of Cdk1 substrate phosphorylation sites provides insights into evolution.</title>
        <authorList>
            <person name="Holt L.J."/>
            <person name="Tuch B.B."/>
            <person name="Villen J."/>
            <person name="Johnson A.D."/>
            <person name="Gygi S.P."/>
            <person name="Morgan D.O."/>
        </authorList>
    </citation>
    <scope>PHOSPHORYLATION [LARGE SCALE ANALYSIS] AT SER-31; SER-34; SER-36; SER-237; THR-334 AND SER-520</scope>
    <scope>IDENTIFICATION BY MASS SPECTROMETRY [LARGE SCALE ANALYSIS]</scope>
</reference>